<reference key="1">
    <citation type="journal article" date="2003" name="Nat. Genet.">
        <title>Comparative analysis of the genome sequences of Bordetella pertussis, Bordetella parapertussis and Bordetella bronchiseptica.</title>
        <authorList>
            <person name="Parkhill J."/>
            <person name="Sebaihia M."/>
            <person name="Preston A."/>
            <person name="Murphy L.D."/>
            <person name="Thomson N.R."/>
            <person name="Harris D.E."/>
            <person name="Holden M.T.G."/>
            <person name="Churcher C.M."/>
            <person name="Bentley S.D."/>
            <person name="Mungall K.L."/>
            <person name="Cerdeno-Tarraga A.-M."/>
            <person name="Temple L."/>
            <person name="James K.D."/>
            <person name="Harris B."/>
            <person name="Quail M.A."/>
            <person name="Achtman M."/>
            <person name="Atkin R."/>
            <person name="Baker S."/>
            <person name="Basham D."/>
            <person name="Bason N."/>
            <person name="Cherevach I."/>
            <person name="Chillingworth T."/>
            <person name="Collins M."/>
            <person name="Cronin A."/>
            <person name="Davis P."/>
            <person name="Doggett J."/>
            <person name="Feltwell T."/>
            <person name="Goble A."/>
            <person name="Hamlin N."/>
            <person name="Hauser H."/>
            <person name="Holroyd S."/>
            <person name="Jagels K."/>
            <person name="Leather S."/>
            <person name="Moule S."/>
            <person name="Norberczak H."/>
            <person name="O'Neil S."/>
            <person name="Ormond D."/>
            <person name="Price C."/>
            <person name="Rabbinowitsch E."/>
            <person name="Rutter S."/>
            <person name="Sanders M."/>
            <person name="Saunders D."/>
            <person name="Seeger K."/>
            <person name="Sharp S."/>
            <person name="Simmonds M."/>
            <person name="Skelton J."/>
            <person name="Squares R."/>
            <person name="Squares S."/>
            <person name="Stevens K."/>
            <person name="Unwin L."/>
            <person name="Whitehead S."/>
            <person name="Barrell B.G."/>
            <person name="Maskell D.J."/>
        </authorList>
    </citation>
    <scope>NUCLEOTIDE SEQUENCE [LARGE SCALE GENOMIC DNA]</scope>
    <source>
        <strain>ATCC BAA-588 / NCTC 13252 / RB50</strain>
    </source>
</reference>
<organism>
    <name type="scientific">Bordetella bronchiseptica (strain ATCC BAA-588 / NCTC 13252 / RB50)</name>
    <name type="common">Alcaligenes bronchisepticus</name>
    <dbReference type="NCBI Taxonomy" id="257310"/>
    <lineage>
        <taxon>Bacteria</taxon>
        <taxon>Pseudomonadati</taxon>
        <taxon>Pseudomonadota</taxon>
        <taxon>Betaproteobacteria</taxon>
        <taxon>Burkholderiales</taxon>
        <taxon>Alcaligenaceae</taxon>
        <taxon>Bordetella</taxon>
    </lineage>
</organism>
<protein>
    <recommendedName>
        <fullName evidence="1">Methionine--tRNA ligase</fullName>
        <ecNumber evidence="1">6.1.1.10</ecNumber>
    </recommendedName>
    <alternativeName>
        <fullName evidence="1">Methionyl-tRNA synthetase</fullName>
        <shortName evidence="1">MetRS</shortName>
    </alternativeName>
</protein>
<feature type="chain" id="PRO_0000139106" description="Methionine--tRNA ligase">
    <location>
        <begin position="1"/>
        <end position="692"/>
    </location>
</feature>
<feature type="domain" description="tRNA-binding" evidence="1">
    <location>
        <begin position="586"/>
        <end position="692"/>
    </location>
</feature>
<feature type="short sequence motif" description="'HIGH' region">
    <location>
        <begin position="12"/>
        <end position="22"/>
    </location>
</feature>
<feature type="short sequence motif" description="'KMSKS' region">
    <location>
        <begin position="341"/>
        <end position="345"/>
    </location>
</feature>
<feature type="binding site" evidence="1">
    <location>
        <position position="143"/>
    </location>
    <ligand>
        <name>Zn(2+)</name>
        <dbReference type="ChEBI" id="CHEBI:29105"/>
    </ligand>
</feature>
<feature type="binding site" evidence="1">
    <location>
        <position position="146"/>
    </location>
    <ligand>
        <name>Zn(2+)</name>
        <dbReference type="ChEBI" id="CHEBI:29105"/>
    </ligand>
</feature>
<feature type="binding site" evidence="1">
    <location>
        <position position="156"/>
    </location>
    <ligand>
        <name>Zn(2+)</name>
        <dbReference type="ChEBI" id="CHEBI:29105"/>
    </ligand>
</feature>
<feature type="binding site" evidence="1">
    <location>
        <position position="159"/>
    </location>
    <ligand>
        <name>Zn(2+)</name>
        <dbReference type="ChEBI" id="CHEBI:29105"/>
    </ligand>
</feature>
<feature type="binding site" evidence="1">
    <location>
        <position position="344"/>
    </location>
    <ligand>
        <name>ATP</name>
        <dbReference type="ChEBI" id="CHEBI:30616"/>
    </ligand>
</feature>
<accession>Q7WP45</accession>
<evidence type="ECO:0000255" key="1">
    <source>
        <dbReference type="HAMAP-Rule" id="MF_00098"/>
    </source>
</evidence>
<keyword id="KW-0030">Aminoacyl-tRNA synthetase</keyword>
<keyword id="KW-0067">ATP-binding</keyword>
<keyword id="KW-0963">Cytoplasm</keyword>
<keyword id="KW-0436">Ligase</keyword>
<keyword id="KW-0479">Metal-binding</keyword>
<keyword id="KW-0547">Nucleotide-binding</keyword>
<keyword id="KW-0648">Protein biosynthesis</keyword>
<keyword id="KW-0694">RNA-binding</keyword>
<keyword id="KW-0820">tRNA-binding</keyword>
<keyword id="KW-0862">Zinc</keyword>
<sequence>MSRTLFVTTALPYANGSFHIGHIMEYIQADIWVRSMRMAGHTVHFVGADDAHGAPIMLKAEKEGITPQALVARYAAERPRYLDGFHIRFDHWHSTDTPENVALSQEIYRALKSEGLIETRSIEQFYDPVKGMFLADRYIKGECPRCHAKDQYGDSCEVCGAVYAPTELINPYSALTGAAPVLKSSDHFFFKLSDPRCVEFLQQWTTGANRQGVKHLQAEVQAKTREWLGGDDGEAKLGDWDISRDAPYFGIEIPDAPGKYFYVWLDAPVGYLASLKSYCAVKGLDFDALLDPAGPTEQVHFIGKDIIYFHALFWPAMLKFAGRKTPDQLNVHGFITVSGEKMSKSRGTGISPLRYLEIGMDAEWLRYYMAAKLNARVEDMDFNPEDFVARVNSDLVGKYVNIASRAAAFITRHFDGELAYDGDTDALAAEFAQQAESIRAAFEAREYNRAVREIMAHADRINQAFDAAQPWVMAKGIGAADAATRARLQDICSRALAGFKALSVMLAPVLPALASRVARELFGANADFAWGDAQQLPQRVAPFKHLMQRVDPKLLDDLFEPPAAEASAPAALPGGEALADTITIDDFAKIDLRIARIVNCEEVEGSTKLLRLTLDVGEGRHRNVFSGIKSAYQPQDLVGKLTVLVANLAPRKMKFGVSEGMVLAASHADEKAEPGIYVLEPWPGAQPGMRVR</sequence>
<name>SYM_BORBR</name>
<comment type="function">
    <text evidence="1">Is required not only for elongation of protein synthesis but also for the initiation of all mRNA translation through initiator tRNA(fMet) aminoacylation.</text>
</comment>
<comment type="catalytic activity">
    <reaction evidence="1">
        <text>tRNA(Met) + L-methionine + ATP = L-methionyl-tRNA(Met) + AMP + diphosphate</text>
        <dbReference type="Rhea" id="RHEA:13481"/>
        <dbReference type="Rhea" id="RHEA-COMP:9667"/>
        <dbReference type="Rhea" id="RHEA-COMP:9698"/>
        <dbReference type="ChEBI" id="CHEBI:30616"/>
        <dbReference type="ChEBI" id="CHEBI:33019"/>
        <dbReference type="ChEBI" id="CHEBI:57844"/>
        <dbReference type="ChEBI" id="CHEBI:78442"/>
        <dbReference type="ChEBI" id="CHEBI:78530"/>
        <dbReference type="ChEBI" id="CHEBI:456215"/>
        <dbReference type="EC" id="6.1.1.10"/>
    </reaction>
</comment>
<comment type="cofactor">
    <cofactor evidence="1">
        <name>Zn(2+)</name>
        <dbReference type="ChEBI" id="CHEBI:29105"/>
    </cofactor>
    <text evidence="1">Binds 1 zinc ion per subunit.</text>
</comment>
<comment type="subunit">
    <text evidence="1">Homodimer.</text>
</comment>
<comment type="subcellular location">
    <subcellularLocation>
        <location evidence="1">Cytoplasm</location>
    </subcellularLocation>
</comment>
<comment type="similarity">
    <text evidence="1">Belongs to the class-I aminoacyl-tRNA synthetase family. MetG type 1 subfamily.</text>
</comment>
<proteinExistence type="inferred from homology"/>
<dbReference type="EC" id="6.1.1.10" evidence="1"/>
<dbReference type="EMBL" id="BX640439">
    <property type="protein sequence ID" value="CAE31339.1"/>
    <property type="molecule type" value="Genomic_DNA"/>
</dbReference>
<dbReference type="RefSeq" id="WP_010925962.1">
    <property type="nucleotide sequence ID" value="NC_002927.3"/>
</dbReference>
<dbReference type="SMR" id="Q7WP45"/>
<dbReference type="GeneID" id="56480491"/>
<dbReference type="KEGG" id="bbr:BB0840"/>
<dbReference type="eggNOG" id="COG0073">
    <property type="taxonomic scope" value="Bacteria"/>
</dbReference>
<dbReference type="eggNOG" id="COG0143">
    <property type="taxonomic scope" value="Bacteria"/>
</dbReference>
<dbReference type="HOGENOM" id="CLU_009710_7_0_4"/>
<dbReference type="Proteomes" id="UP000001027">
    <property type="component" value="Chromosome"/>
</dbReference>
<dbReference type="GO" id="GO:0005829">
    <property type="term" value="C:cytosol"/>
    <property type="evidence" value="ECO:0007669"/>
    <property type="project" value="TreeGrafter"/>
</dbReference>
<dbReference type="GO" id="GO:0005524">
    <property type="term" value="F:ATP binding"/>
    <property type="evidence" value="ECO:0007669"/>
    <property type="project" value="UniProtKB-UniRule"/>
</dbReference>
<dbReference type="GO" id="GO:0046872">
    <property type="term" value="F:metal ion binding"/>
    <property type="evidence" value="ECO:0007669"/>
    <property type="project" value="UniProtKB-KW"/>
</dbReference>
<dbReference type="GO" id="GO:0004825">
    <property type="term" value="F:methionine-tRNA ligase activity"/>
    <property type="evidence" value="ECO:0007669"/>
    <property type="project" value="UniProtKB-UniRule"/>
</dbReference>
<dbReference type="GO" id="GO:0000049">
    <property type="term" value="F:tRNA binding"/>
    <property type="evidence" value="ECO:0007669"/>
    <property type="project" value="UniProtKB-KW"/>
</dbReference>
<dbReference type="GO" id="GO:0006431">
    <property type="term" value="P:methionyl-tRNA aminoacylation"/>
    <property type="evidence" value="ECO:0007669"/>
    <property type="project" value="UniProtKB-UniRule"/>
</dbReference>
<dbReference type="CDD" id="cd07957">
    <property type="entry name" value="Anticodon_Ia_Met"/>
    <property type="match status" value="1"/>
</dbReference>
<dbReference type="CDD" id="cd00814">
    <property type="entry name" value="MetRS_core"/>
    <property type="match status" value="1"/>
</dbReference>
<dbReference type="CDD" id="cd02800">
    <property type="entry name" value="tRNA_bind_EcMetRS_like"/>
    <property type="match status" value="1"/>
</dbReference>
<dbReference type="FunFam" id="2.20.28.20:FF:000001">
    <property type="entry name" value="Methionine--tRNA ligase"/>
    <property type="match status" value="1"/>
</dbReference>
<dbReference type="FunFam" id="2.40.50.140:FF:000042">
    <property type="entry name" value="Methionine--tRNA ligase"/>
    <property type="match status" value="1"/>
</dbReference>
<dbReference type="Gene3D" id="3.40.50.620">
    <property type="entry name" value="HUPs"/>
    <property type="match status" value="1"/>
</dbReference>
<dbReference type="Gene3D" id="1.10.730.10">
    <property type="entry name" value="Isoleucyl-tRNA Synthetase, Domain 1"/>
    <property type="match status" value="1"/>
</dbReference>
<dbReference type="Gene3D" id="2.20.28.20">
    <property type="entry name" value="Methionyl-tRNA synthetase, Zn-domain"/>
    <property type="match status" value="1"/>
</dbReference>
<dbReference type="Gene3D" id="2.40.50.140">
    <property type="entry name" value="Nucleic acid-binding proteins"/>
    <property type="match status" value="1"/>
</dbReference>
<dbReference type="HAMAP" id="MF_00098">
    <property type="entry name" value="Met_tRNA_synth_type1"/>
    <property type="match status" value="1"/>
</dbReference>
<dbReference type="InterPro" id="IPR001412">
    <property type="entry name" value="aa-tRNA-synth_I_CS"/>
</dbReference>
<dbReference type="InterPro" id="IPR041872">
    <property type="entry name" value="Anticodon_Met"/>
</dbReference>
<dbReference type="InterPro" id="IPR004495">
    <property type="entry name" value="Met-tRNA-synth_bsu_C"/>
</dbReference>
<dbReference type="InterPro" id="IPR023458">
    <property type="entry name" value="Met-tRNA_ligase_1"/>
</dbReference>
<dbReference type="InterPro" id="IPR014758">
    <property type="entry name" value="Met-tRNA_synth"/>
</dbReference>
<dbReference type="InterPro" id="IPR015413">
    <property type="entry name" value="Methionyl/Leucyl_tRNA_Synth"/>
</dbReference>
<dbReference type="InterPro" id="IPR033911">
    <property type="entry name" value="MetRS_core"/>
</dbReference>
<dbReference type="InterPro" id="IPR029038">
    <property type="entry name" value="MetRS_Zn"/>
</dbReference>
<dbReference type="InterPro" id="IPR012340">
    <property type="entry name" value="NA-bd_OB-fold"/>
</dbReference>
<dbReference type="InterPro" id="IPR014729">
    <property type="entry name" value="Rossmann-like_a/b/a_fold"/>
</dbReference>
<dbReference type="InterPro" id="IPR002547">
    <property type="entry name" value="tRNA-bd_dom"/>
</dbReference>
<dbReference type="InterPro" id="IPR009080">
    <property type="entry name" value="tRNAsynth_Ia_anticodon-bd"/>
</dbReference>
<dbReference type="NCBIfam" id="TIGR00398">
    <property type="entry name" value="metG"/>
    <property type="match status" value="1"/>
</dbReference>
<dbReference type="NCBIfam" id="TIGR00399">
    <property type="entry name" value="metG_C_term"/>
    <property type="match status" value="1"/>
</dbReference>
<dbReference type="NCBIfam" id="NF001100">
    <property type="entry name" value="PRK00133.1"/>
    <property type="match status" value="1"/>
</dbReference>
<dbReference type="PANTHER" id="PTHR45765">
    <property type="entry name" value="METHIONINE--TRNA LIGASE"/>
    <property type="match status" value="1"/>
</dbReference>
<dbReference type="PANTHER" id="PTHR45765:SF1">
    <property type="entry name" value="METHIONINE--TRNA LIGASE, CYTOPLASMIC"/>
    <property type="match status" value="1"/>
</dbReference>
<dbReference type="Pfam" id="PF09334">
    <property type="entry name" value="tRNA-synt_1g"/>
    <property type="match status" value="1"/>
</dbReference>
<dbReference type="Pfam" id="PF01588">
    <property type="entry name" value="tRNA_bind"/>
    <property type="match status" value="1"/>
</dbReference>
<dbReference type="PRINTS" id="PR01041">
    <property type="entry name" value="TRNASYNTHMET"/>
</dbReference>
<dbReference type="SUPFAM" id="SSF47323">
    <property type="entry name" value="Anticodon-binding domain of a subclass of class I aminoacyl-tRNA synthetases"/>
    <property type="match status" value="1"/>
</dbReference>
<dbReference type="SUPFAM" id="SSF57770">
    <property type="entry name" value="Methionyl-tRNA synthetase (MetRS), Zn-domain"/>
    <property type="match status" value="1"/>
</dbReference>
<dbReference type="SUPFAM" id="SSF50249">
    <property type="entry name" value="Nucleic acid-binding proteins"/>
    <property type="match status" value="1"/>
</dbReference>
<dbReference type="SUPFAM" id="SSF52374">
    <property type="entry name" value="Nucleotidylyl transferase"/>
    <property type="match status" value="1"/>
</dbReference>
<dbReference type="PROSITE" id="PS00178">
    <property type="entry name" value="AA_TRNA_LIGASE_I"/>
    <property type="match status" value="1"/>
</dbReference>
<dbReference type="PROSITE" id="PS50886">
    <property type="entry name" value="TRBD"/>
    <property type="match status" value="1"/>
</dbReference>
<gene>
    <name evidence="1" type="primary">metG</name>
    <name type="ordered locus">BB0840</name>
</gene>